<protein>
    <recommendedName>
        <fullName>Sperm protamine P1</fullName>
    </recommendedName>
    <alternativeName>
        <fullName>Cysteine-rich protamine</fullName>
    </alternativeName>
</protein>
<evidence type="ECO:0000250" key="1">
    <source>
        <dbReference type="UniProtKB" id="P02318"/>
    </source>
</evidence>
<evidence type="ECO:0000269" key="2">
    <source ref="4"/>
</evidence>
<evidence type="ECO:0000305" key="3"/>
<dbReference type="EMBL" id="X13381">
    <property type="protein sequence ID" value="CAA31758.1"/>
    <property type="molecule type" value="mRNA"/>
</dbReference>
<dbReference type="EMBL" id="M80678">
    <property type="status" value="NOT_ANNOTATED_CDS"/>
    <property type="molecule type" value="Genomic_DNA"/>
</dbReference>
<dbReference type="EMBL" id="S66702">
    <property type="protein sequence ID" value="AAB28721.2"/>
    <property type="status" value="ALT_INIT"/>
    <property type="molecule type" value="Genomic_DNA"/>
</dbReference>
<dbReference type="PIR" id="A02659">
    <property type="entry name" value="HSPG"/>
</dbReference>
<dbReference type="PIR" id="S21672">
    <property type="entry name" value="S21672"/>
</dbReference>
<dbReference type="RefSeq" id="NP_999418.1">
    <property type="nucleotide sequence ID" value="NM_214253.1"/>
</dbReference>
<dbReference type="STRING" id="9823.ENSSSCP00000019687"/>
<dbReference type="PaxDb" id="9823-ENSSSCP00000019687"/>
<dbReference type="Ensembl" id="ENSSSCT00000029974.4">
    <property type="protein sequence ID" value="ENSSSCP00000019687.3"/>
    <property type="gene ID" value="ENSSSCG00000021337.4"/>
</dbReference>
<dbReference type="Ensembl" id="ENSSSCT00015072053.1">
    <property type="protein sequence ID" value="ENSSSCP00015028898.1"/>
    <property type="gene ID" value="ENSSSCG00015054098.1"/>
</dbReference>
<dbReference type="Ensembl" id="ENSSSCT00025061938.1">
    <property type="protein sequence ID" value="ENSSSCP00025026300.1"/>
    <property type="gene ID" value="ENSSSCG00025045596.1"/>
</dbReference>
<dbReference type="Ensembl" id="ENSSSCT00030044903.1">
    <property type="protein sequence ID" value="ENSSSCP00030020180.1"/>
    <property type="gene ID" value="ENSSSCG00030032482.1"/>
</dbReference>
<dbReference type="Ensembl" id="ENSSSCT00035065987.1">
    <property type="protein sequence ID" value="ENSSSCP00035026776.1"/>
    <property type="gene ID" value="ENSSSCG00035049493.1"/>
</dbReference>
<dbReference type="Ensembl" id="ENSSSCT00040017446.1">
    <property type="protein sequence ID" value="ENSSSCP00040007124.1"/>
    <property type="gene ID" value="ENSSSCG00040013140.1"/>
</dbReference>
<dbReference type="Ensembl" id="ENSSSCT00045041379.1">
    <property type="protein sequence ID" value="ENSSSCP00045028726.1"/>
    <property type="gene ID" value="ENSSSCG00045024279.1"/>
</dbReference>
<dbReference type="Ensembl" id="ENSSSCT00050105533.1">
    <property type="protein sequence ID" value="ENSSSCP00050046437.1"/>
    <property type="gene ID" value="ENSSSCG00050076776.1"/>
</dbReference>
<dbReference type="Ensembl" id="ENSSSCT00055025718.1">
    <property type="protein sequence ID" value="ENSSSCP00055020439.1"/>
    <property type="gene ID" value="ENSSSCG00055013080.1"/>
</dbReference>
<dbReference type="Ensembl" id="ENSSSCT00060103087.1">
    <property type="protein sequence ID" value="ENSSSCP00060044958.1"/>
    <property type="gene ID" value="ENSSSCG00060075310.1"/>
</dbReference>
<dbReference type="Ensembl" id="ENSSSCT00065103977.1">
    <property type="protein sequence ID" value="ENSSSCP00065046025.1"/>
    <property type="gene ID" value="ENSSSCG00065075354.1"/>
</dbReference>
<dbReference type="Ensembl" id="ENSSSCT00070051566.1">
    <property type="protein sequence ID" value="ENSSSCP00070043608.1"/>
    <property type="gene ID" value="ENSSSCG00070025800.1"/>
</dbReference>
<dbReference type="Ensembl" id="ENSSSCT00085049057">
    <property type="protein sequence ID" value="ENSSSCP00085034404"/>
    <property type="gene ID" value="ENSSSCG00085025529"/>
</dbReference>
<dbReference type="Ensembl" id="ENSSSCT00090022163">
    <property type="protein sequence ID" value="ENSSSCP00090013571"/>
    <property type="gene ID" value="ENSSSCG00090012625"/>
</dbReference>
<dbReference type="Ensembl" id="ENSSSCT00105070934">
    <property type="protein sequence ID" value="ENSSSCP00105050240"/>
    <property type="gene ID" value="ENSSSCG00105037194"/>
</dbReference>
<dbReference type="Ensembl" id="ENSSSCT00110074459">
    <property type="protein sequence ID" value="ENSSSCP00110052563"/>
    <property type="gene ID" value="ENSSSCG00110039002"/>
</dbReference>
<dbReference type="Ensembl" id="ENSSSCT00115029676">
    <property type="protein sequence ID" value="ENSSSCP00115028180"/>
    <property type="gene ID" value="ENSSSCG00115016903"/>
</dbReference>
<dbReference type="Ensembl" id="ENSSSCT00130018220">
    <property type="protein sequence ID" value="ENSSSCP00130012304"/>
    <property type="gene ID" value="ENSSSCG00130009752"/>
</dbReference>
<dbReference type="GeneID" id="397487"/>
<dbReference type="KEGG" id="ssc:397487"/>
<dbReference type="CTD" id="5619"/>
<dbReference type="VGNC" id="VGNC:110701">
    <property type="gene designation" value="PRM1"/>
</dbReference>
<dbReference type="HOGENOM" id="CLU_214580_1_0_1"/>
<dbReference type="InParanoid" id="P04101"/>
<dbReference type="OMA" id="MARYICC"/>
<dbReference type="Proteomes" id="UP000008227">
    <property type="component" value="Chromosome 3"/>
</dbReference>
<dbReference type="Proteomes" id="UP000314985">
    <property type="component" value="Chromosome 3"/>
</dbReference>
<dbReference type="Proteomes" id="UP000694570">
    <property type="component" value="Unplaced"/>
</dbReference>
<dbReference type="Proteomes" id="UP000694571">
    <property type="component" value="Unplaced"/>
</dbReference>
<dbReference type="Proteomes" id="UP000694720">
    <property type="component" value="Unplaced"/>
</dbReference>
<dbReference type="Proteomes" id="UP000694722">
    <property type="component" value="Unplaced"/>
</dbReference>
<dbReference type="Proteomes" id="UP000694723">
    <property type="component" value="Unplaced"/>
</dbReference>
<dbReference type="Proteomes" id="UP000694724">
    <property type="component" value="Unplaced"/>
</dbReference>
<dbReference type="Proteomes" id="UP000694725">
    <property type="component" value="Unplaced"/>
</dbReference>
<dbReference type="Proteomes" id="UP000694726">
    <property type="component" value="Unplaced"/>
</dbReference>
<dbReference type="Proteomes" id="UP000694727">
    <property type="component" value="Unplaced"/>
</dbReference>
<dbReference type="Proteomes" id="UP000694728">
    <property type="component" value="Unplaced"/>
</dbReference>
<dbReference type="GO" id="GO:0000786">
    <property type="term" value="C:nucleosome"/>
    <property type="evidence" value="ECO:0007669"/>
    <property type="project" value="UniProtKB-KW"/>
</dbReference>
<dbReference type="GO" id="GO:0005634">
    <property type="term" value="C:nucleus"/>
    <property type="evidence" value="ECO:0000314"/>
    <property type="project" value="MGI"/>
</dbReference>
<dbReference type="GO" id="GO:0003677">
    <property type="term" value="F:DNA binding"/>
    <property type="evidence" value="ECO:0007669"/>
    <property type="project" value="UniProtKB-KW"/>
</dbReference>
<dbReference type="GO" id="GO:0030261">
    <property type="term" value="P:chromosome condensation"/>
    <property type="evidence" value="ECO:0007669"/>
    <property type="project" value="UniProtKB-KW"/>
</dbReference>
<dbReference type="GO" id="GO:0035092">
    <property type="term" value="P:sperm DNA condensation"/>
    <property type="evidence" value="ECO:0007669"/>
    <property type="project" value="InterPro"/>
</dbReference>
<dbReference type="InterPro" id="IPR000221">
    <property type="entry name" value="Protamine_P1"/>
</dbReference>
<dbReference type="Pfam" id="PF00260">
    <property type="entry name" value="Protamine_P1"/>
    <property type="match status" value="1"/>
</dbReference>
<dbReference type="PROSITE" id="PS00048">
    <property type="entry name" value="PROTAMINE_P1"/>
    <property type="match status" value="1"/>
</dbReference>
<keyword id="KW-0158">Chromosome</keyword>
<keyword id="KW-0217">Developmental protein</keyword>
<keyword id="KW-0221">Differentiation</keyword>
<keyword id="KW-0903">Direct protein sequencing</keyword>
<keyword id="KW-1015">Disulfide bond</keyword>
<keyword id="KW-0226">DNA condensation</keyword>
<keyword id="KW-0238">DNA-binding</keyword>
<keyword id="KW-0544">Nucleosome core</keyword>
<keyword id="KW-0539">Nucleus</keyword>
<keyword id="KW-1185">Reference proteome</keyword>
<keyword id="KW-0744">Spermatogenesis</keyword>
<accession>P04101</accession>
<name>HSP1_PIG</name>
<feature type="initiator methionine" description="Removed" evidence="2">
    <location>
        <position position="1"/>
    </location>
</feature>
<feature type="chain" id="PRO_0000191531" description="Sperm protamine P1">
    <location>
        <begin position="2"/>
        <end position="50"/>
    </location>
</feature>
<feature type="disulfide bond" description="Interchain (with C-22)" evidence="1">
    <location>
        <position position="6"/>
    </location>
</feature>
<feature type="disulfide bond" evidence="1">
    <location>
        <begin position="7"/>
        <end position="15"/>
    </location>
</feature>
<feature type="disulfide bond" description="Interchain (with C-6)" evidence="1">
    <location>
        <position position="22"/>
    </location>
</feature>
<feature type="disulfide bond" description="Interchain (with C-38)" evidence="1">
    <location>
        <position position="38"/>
    </location>
</feature>
<feature type="disulfide bond" evidence="1">
    <location>
        <begin position="39"/>
        <end position="47"/>
    </location>
</feature>
<feature type="sequence conflict" description="In Ref. 4; AA sequence." evidence="3" ref="4">
    <original>R</original>
    <variation>RR</variation>
    <location>
        <position position="35"/>
    </location>
</feature>
<organism>
    <name type="scientific">Sus scrofa</name>
    <name type="common">Pig</name>
    <dbReference type="NCBI Taxonomy" id="9823"/>
    <lineage>
        <taxon>Eukaryota</taxon>
        <taxon>Metazoa</taxon>
        <taxon>Chordata</taxon>
        <taxon>Craniata</taxon>
        <taxon>Vertebrata</taxon>
        <taxon>Euteleostomi</taxon>
        <taxon>Mammalia</taxon>
        <taxon>Eutheria</taxon>
        <taxon>Laurasiatheria</taxon>
        <taxon>Artiodactyla</taxon>
        <taxon>Suina</taxon>
        <taxon>Suidae</taxon>
        <taxon>Sus</taxon>
    </lineage>
</organism>
<comment type="function">
    <text>Protamines substitute for histones in the chromatin of sperm during the haploid phase of spermatogenesis. They compact sperm DNA into a highly condensed, stable and inactive complex.</text>
</comment>
<comment type="subunit">
    <text>Cross-linked by interchain disulfide bonds around the DNA-helix.</text>
</comment>
<comment type="subcellular location">
    <subcellularLocation>
        <location>Nucleus</location>
    </subcellularLocation>
    <subcellularLocation>
        <location>Chromosome</location>
    </subcellularLocation>
</comment>
<comment type="tissue specificity">
    <text>Testis.</text>
</comment>
<comment type="similarity">
    <text evidence="3">Belongs to the protamine P1 family.</text>
</comment>
<comment type="sequence caution" evidence="3">
    <conflict type="erroneous initiation">
        <sequence resource="EMBL-CDS" id="AAB28721"/>
    </conflict>
</comment>
<reference key="1">
    <citation type="journal article" date="1988" name="Nucleic Acids Res.">
        <title>The nucleotide sequence of a boar protamine 1 cDNA.</title>
        <authorList>
            <person name="Maier W.-M."/>
            <person name="Adham I.M."/>
            <person name="Klemm U."/>
        </authorList>
    </citation>
    <scope>NUCLEOTIDE SEQUENCE [MRNA]</scope>
    <source>
        <tissue>Testis</tissue>
    </source>
</reference>
<reference key="2">
    <citation type="journal article" date="1992" name="Biol. Chem. Hoppe-Seyler">
        <title>Characterization of four genes encoding basic proteins of the porcine spermatid nucleus and close linkage of three of them.</title>
        <authorList>
            <person name="Keime S."/>
            <person name="Heitland K."/>
            <person name="Kumm S."/>
            <person name="Schloesser M."/>
            <person name="Hroch N."/>
            <person name="Holtz W."/>
            <person name="Engel W."/>
        </authorList>
    </citation>
    <scope>NUCLEOTIDE SEQUENCE [GENOMIC DNA]</scope>
</reference>
<reference key="3">
    <citation type="journal article" date="1993" name="Biochem. Biophys. Res. Commun.">
        <title>An aminoterminally extended P1-protamine variant in the boar.</title>
        <authorList>
            <person name="Pirhonen A."/>
            <person name="Jaaskelainen S."/>
            <person name="Linnala-Kankkunen A."/>
            <person name="Maenpaa P.H."/>
        </authorList>
    </citation>
    <scope>NUCLEOTIDE SEQUENCE</scope>
    <source>
        <tissue>Sperm</tissue>
    </source>
</reference>
<reference key="4">
    <citation type="journal article" date="1983" name="Biochim. Biophys. Acta">
        <title>Complete amino acid sequence of boar protamine.</title>
        <authorList>
            <person name="Tobita T."/>
            <person name="Tsutsumi H."/>
            <person name="Kato A."/>
            <person name="Suzuki H."/>
            <person name="Nomoto M."/>
            <person name="Nakano M."/>
            <person name="Ando T."/>
        </authorList>
    </citation>
    <scope>PROTEIN SEQUENCE OF 2-50</scope>
</reference>
<proteinExistence type="evidence at protein level"/>
<sequence length="50" mass="6559">MARYRCCRSHSRSRCRPRRRRCRRRRRRCCPRRRRAVCCRRYTVIRCRRC</sequence>
<gene>
    <name type="primary">PRM1</name>
    <name type="synonym">PRM-1</name>
</gene>